<feature type="chain" id="PRO_1000194704" description="Ribose-5-phosphate isomerase A">
    <location>
        <begin position="1"/>
        <end position="219"/>
    </location>
</feature>
<feature type="active site" description="Proton acceptor" evidence="1">
    <location>
        <position position="103"/>
    </location>
</feature>
<feature type="binding site" evidence="1">
    <location>
        <begin position="28"/>
        <end position="31"/>
    </location>
    <ligand>
        <name>substrate</name>
    </ligand>
</feature>
<feature type="binding site" evidence="1">
    <location>
        <begin position="81"/>
        <end position="84"/>
    </location>
    <ligand>
        <name>substrate</name>
    </ligand>
</feature>
<feature type="binding site" evidence="1">
    <location>
        <begin position="94"/>
        <end position="97"/>
    </location>
    <ligand>
        <name>substrate</name>
    </ligand>
</feature>
<feature type="binding site" evidence="1">
    <location>
        <position position="121"/>
    </location>
    <ligand>
        <name>substrate</name>
    </ligand>
</feature>
<evidence type="ECO:0000255" key="1">
    <source>
        <dbReference type="HAMAP-Rule" id="MF_00170"/>
    </source>
</evidence>
<gene>
    <name evidence="1" type="primary">rpiA</name>
    <name type="ordered locus">E2348C_3165</name>
</gene>
<protein>
    <recommendedName>
        <fullName evidence="1">Ribose-5-phosphate isomerase A</fullName>
        <ecNumber evidence="1">5.3.1.6</ecNumber>
    </recommendedName>
    <alternativeName>
        <fullName evidence="1">Phosphoriboisomerase A</fullName>
        <shortName evidence="1">PRI</shortName>
    </alternativeName>
</protein>
<keyword id="KW-0413">Isomerase</keyword>
<keyword id="KW-1185">Reference proteome</keyword>
<comment type="function">
    <text evidence="1">Catalyzes the reversible conversion of ribose-5-phosphate to ribulose 5-phosphate.</text>
</comment>
<comment type="catalytic activity">
    <reaction evidence="1">
        <text>aldehydo-D-ribose 5-phosphate = D-ribulose 5-phosphate</text>
        <dbReference type="Rhea" id="RHEA:14657"/>
        <dbReference type="ChEBI" id="CHEBI:58121"/>
        <dbReference type="ChEBI" id="CHEBI:58273"/>
        <dbReference type="EC" id="5.3.1.6"/>
    </reaction>
</comment>
<comment type="pathway">
    <text evidence="1">Carbohydrate degradation; pentose phosphate pathway; D-ribose 5-phosphate from D-ribulose 5-phosphate (non-oxidative stage): step 1/1.</text>
</comment>
<comment type="subunit">
    <text evidence="1">Homodimer.</text>
</comment>
<comment type="similarity">
    <text evidence="1">Belongs to the ribose 5-phosphate isomerase family.</text>
</comment>
<accession>B7UHW1</accession>
<reference key="1">
    <citation type="journal article" date="2009" name="J. Bacteriol.">
        <title>Complete genome sequence and comparative genome analysis of enteropathogenic Escherichia coli O127:H6 strain E2348/69.</title>
        <authorList>
            <person name="Iguchi A."/>
            <person name="Thomson N.R."/>
            <person name="Ogura Y."/>
            <person name="Saunders D."/>
            <person name="Ooka T."/>
            <person name="Henderson I.R."/>
            <person name="Harris D."/>
            <person name="Asadulghani M."/>
            <person name="Kurokawa K."/>
            <person name="Dean P."/>
            <person name="Kenny B."/>
            <person name="Quail M.A."/>
            <person name="Thurston S."/>
            <person name="Dougan G."/>
            <person name="Hayashi T."/>
            <person name="Parkhill J."/>
            <person name="Frankel G."/>
        </authorList>
    </citation>
    <scope>NUCLEOTIDE SEQUENCE [LARGE SCALE GENOMIC DNA]</scope>
    <source>
        <strain>E2348/69 / EPEC</strain>
    </source>
</reference>
<sequence length="219" mass="22860">MTQDELKKAVGWAALQYVQPGTIVGVGTGSTAAHFIDALGTMKGQIEGAVSSSDASTEKLKSLGIHVFDLNEVDSLGIYVDGADEINGHMQMIKGGGAALTREKIIASVAEKFICIADASKQVDILGKFPLPVEVIPMARSAVARQLVKLGGRPEYRQGVVTDNGNVILDVHGMEILDPIAMENAINAIPGVVTVGLFANRGADVALIGTPDGVKTIVK</sequence>
<organism>
    <name type="scientific">Escherichia coli O127:H6 (strain E2348/69 / EPEC)</name>
    <dbReference type="NCBI Taxonomy" id="574521"/>
    <lineage>
        <taxon>Bacteria</taxon>
        <taxon>Pseudomonadati</taxon>
        <taxon>Pseudomonadota</taxon>
        <taxon>Gammaproteobacteria</taxon>
        <taxon>Enterobacterales</taxon>
        <taxon>Enterobacteriaceae</taxon>
        <taxon>Escherichia</taxon>
    </lineage>
</organism>
<name>RPIA_ECO27</name>
<dbReference type="EC" id="5.3.1.6" evidence="1"/>
<dbReference type="EMBL" id="FM180568">
    <property type="protein sequence ID" value="CAS10713.1"/>
    <property type="molecule type" value="Genomic_DNA"/>
</dbReference>
<dbReference type="RefSeq" id="WP_000189743.1">
    <property type="nucleotide sequence ID" value="NC_011601.1"/>
</dbReference>
<dbReference type="SMR" id="B7UHW1"/>
<dbReference type="GeneID" id="93779085"/>
<dbReference type="KEGG" id="ecg:E2348C_3165"/>
<dbReference type="HOGENOM" id="CLU_056590_1_1_6"/>
<dbReference type="UniPathway" id="UPA00115">
    <property type="reaction ID" value="UER00412"/>
</dbReference>
<dbReference type="Proteomes" id="UP000008205">
    <property type="component" value="Chromosome"/>
</dbReference>
<dbReference type="GO" id="GO:0005829">
    <property type="term" value="C:cytosol"/>
    <property type="evidence" value="ECO:0007669"/>
    <property type="project" value="TreeGrafter"/>
</dbReference>
<dbReference type="GO" id="GO:0004751">
    <property type="term" value="F:ribose-5-phosphate isomerase activity"/>
    <property type="evidence" value="ECO:0007669"/>
    <property type="project" value="UniProtKB-UniRule"/>
</dbReference>
<dbReference type="GO" id="GO:0006014">
    <property type="term" value="P:D-ribose metabolic process"/>
    <property type="evidence" value="ECO:0007669"/>
    <property type="project" value="TreeGrafter"/>
</dbReference>
<dbReference type="GO" id="GO:0009052">
    <property type="term" value="P:pentose-phosphate shunt, non-oxidative branch"/>
    <property type="evidence" value="ECO:0007669"/>
    <property type="project" value="UniProtKB-UniRule"/>
</dbReference>
<dbReference type="CDD" id="cd01398">
    <property type="entry name" value="RPI_A"/>
    <property type="match status" value="1"/>
</dbReference>
<dbReference type="FunFam" id="3.30.70.260:FF:000004">
    <property type="entry name" value="Ribose-5-phosphate isomerase A"/>
    <property type="match status" value="1"/>
</dbReference>
<dbReference type="FunFam" id="3.40.50.1360:FF:000001">
    <property type="entry name" value="Ribose-5-phosphate isomerase A"/>
    <property type="match status" value="1"/>
</dbReference>
<dbReference type="Gene3D" id="3.30.70.260">
    <property type="match status" value="1"/>
</dbReference>
<dbReference type="Gene3D" id="3.40.50.1360">
    <property type="match status" value="1"/>
</dbReference>
<dbReference type="HAMAP" id="MF_00170">
    <property type="entry name" value="Rib_5P_isom_A"/>
    <property type="match status" value="1"/>
</dbReference>
<dbReference type="InterPro" id="IPR037171">
    <property type="entry name" value="NagB/RpiA_transferase-like"/>
</dbReference>
<dbReference type="InterPro" id="IPR020672">
    <property type="entry name" value="Ribose5P_isomerase_typA_subgr"/>
</dbReference>
<dbReference type="InterPro" id="IPR004788">
    <property type="entry name" value="Ribose5P_isomerase_type_A"/>
</dbReference>
<dbReference type="NCBIfam" id="NF001924">
    <property type="entry name" value="PRK00702.1"/>
    <property type="match status" value="1"/>
</dbReference>
<dbReference type="NCBIfam" id="TIGR00021">
    <property type="entry name" value="rpiA"/>
    <property type="match status" value="1"/>
</dbReference>
<dbReference type="PANTHER" id="PTHR11934">
    <property type="entry name" value="RIBOSE-5-PHOSPHATE ISOMERASE"/>
    <property type="match status" value="1"/>
</dbReference>
<dbReference type="PANTHER" id="PTHR11934:SF0">
    <property type="entry name" value="RIBOSE-5-PHOSPHATE ISOMERASE"/>
    <property type="match status" value="1"/>
</dbReference>
<dbReference type="Pfam" id="PF06026">
    <property type="entry name" value="Rib_5-P_isom_A"/>
    <property type="match status" value="1"/>
</dbReference>
<dbReference type="SUPFAM" id="SSF75445">
    <property type="entry name" value="D-ribose-5-phosphate isomerase (RpiA), lid domain"/>
    <property type="match status" value="1"/>
</dbReference>
<dbReference type="SUPFAM" id="SSF100950">
    <property type="entry name" value="NagB/RpiA/CoA transferase-like"/>
    <property type="match status" value="1"/>
</dbReference>
<proteinExistence type="inferred from homology"/>